<feature type="chain" id="PRO_0000105817" description="Uncharacterized HTH-type transcriptional regulator YoaU">
    <location>
        <begin position="1"/>
        <end position="290"/>
    </location>
</feature>
<feature type="domain" description="HTH lysR-type" evidence="1">
    <location>
        <begin position="1"/>
        <end position="61"/>
    </location>
</feature>
<feature type="DNA-binding region" description="H-T-H motif" evidence="1">
    <location>
        <begin position="20"/>
        <end position="39"/>
    </location>
</feature>
<proteinExistence type="inferred from homology"/>
<reference key="1">
    <citation type="submission" date="1997-11" db="EMBL/GenBank/DDBJ databases">
        <title>Sequence analysis of the Bacillus subtilis chromosome region between the terC and odhAB loci cloned in a yeast artificial chromosome.</title>
        <authorList>
            <person name="Lapidus A."/>
            <person name="Galleron N."/>
            <person name="Sorokin A."/>
            <person name="Ehrlich S.D."/>
        </authorList>
    </citation>
    <scope>NUCLEOTIDE SEQUENCE [GENOMIC DNA]</scope>
</reference>
<reference key="2">
    <citation type="journal article" date="1997" name="Nature">
        <title>The complete genome sequence of the Gram-positive bacterium Bacillus subtilis.</title>
        <authorList>
            <person name="Kunst F."/>
            <person name="Ogasawara N."/>
            <person name="Moszer I."/>
            <person name="Albertini A.M."/>
            <person name="Alloni G."/>
            <person name="Azevedo V."/>
            <person name="Bertero M.G."/>
            <person name="Bessieres P."/>
            <person name="Bolotin A."/>
            <person name="Borchert S."/>
            <person name="Borriss R."/>
            <person name="Boursier L."/>
            <person name="Brans A."/>
            <person name="Braun M."/>
            <person name="Brignell S.C."/>
            <person name="Bron S."/>
            <person name="Brouillet S."/>
            <person name="Bruschi C.V."/>
            <person name="Caldwell B."/>
            <person name="Capuano V."/>
            <person name="Carter N.M."/>
            <person name="Choi S.-K."/>
            <person name="Codani J.-J."/>
            <person name="Connerton I.F."/>
            <person name="Cummings N.J."/>
            <person name="Daniel R.A."/>
            <person name="Denizot F."/>
            <person name="Devine K.M."/>
            <person name="Duesterhoeft A."/>
            <person name="Ehrlich S.D."/>
            <person name="Emmerson P.T."/>
            <person name="Entian K.-D."/>
            <person name="Errington J."/>
            <person name="Fabret C."/>
            <person name="Ferrari E."/>
            <person name="Foulger D."/>
            <person name="Fritz C."/>
            <person name="Fujita M."/>
            <person name="Fujita Y."/>
            <person name="Fuma S."/>
            <person name="Galizzi A."/>
            <person name="Galleron N."/>
            <person name="Ghim S.-Y."/>
            <person name="Glaser P."/>
            <person name="Goffeau A."/>
            <person name="Golightly E.J."/>
            <person name="Grandi G."/>
            <person name="Guiseppi G."/>
            <person name="Guy B.J."/>
            <person name="Haga K."/>
            <person name="Haiech J."/>
            <person name="Harwood C.R."/>
            <person name="Henaut A."/>
            <person name="Hilbert H."/>
            <person name="Holsappel S."/>
            <person name="Hosono S."/>
            <person name="Hullo M.-F."/>
            <person name="Itaya M."/>
            <person name="Jones L.-M."/>
            <person name="Joris B."/>
            <person name="Karamata D."/>
            <person name="Kasahara Y."/>
            <person name="Klaerr-Blanchard M."/>
            <person name="Klein C."/>
            <person name="Kobayashi Y."/>
            <person name="Koetter P."/>
            <person name="Koningstein G."/>
            <person name="Krogh S."/>
            <person name="Kumano M."/>
            <person name="Kurita K."/>
            <person name="Lapidus A."/>
            <person name="Lardinois S."/>
            <person name="Lauber J."/>
            <person name="Lazarevic V."/>
            <person name="Lee S.-M."/>
            <person name="Levine A."/>
            <person name="Liu H."/>
            <person name="Masuda S."/>
            <person name="Mauel C."/>
            <person name="Medigue C."/>
            <person name="Medina N."/>
            <person name="Mellado R.P."/>
            <person name="Mizuno M."/>
            <person name="Moestl D."/>
            <person name="Nakai S."/>
            <person name="Noback M."/>
            <person name="Noone D."/>
            <person name="O'Reilly M."/>
            <person name="Ogawa K."/>
            <person name="Ogiwara A."/>
            <person name="Oudega B."/>
            <person name="Park S.-H."/>
            <person name="Parro V."/>
            <person name="Pohl T.M."/>
            <person name="Portetelle D."/>
            <person name="Porwollik S."/>
            <person name="Prescott A.M."/>
            <person name="Presecan E."/>
            <person name="Pujic P."/>
            <person name="Purnelle B."/>
            <person name="Rapoport G."/>
            <person name="Rey M."/>
            <person name="Reynolds S."/>
            <person name="Rieger M."/>
            <person name="Rivolta C."/>
            <person name="Rocha E."/>
            <person name="Roche B."/>
            <person name="Rose M."/>
            <person name="Sadaie Y."/>
            <person name="Sato T."/>
            <person name="Scanlan E."/>
            <person name="Schleich S."/>
            <person name="Schroeter R."/>
            <person name="Scoffone F."/>
            <person name="Sekiguchi J."/>
            <person name="Sekowska A."/>
            <person name="Seror S.J."/>
            <person name="Serror P."/>
            <person name="Shin B.-S."/>
            <person name="Soldo B."/>
            <person name="Sorokin A."/>
            <person name="Tacconi E."/>
            <person name="Takagi T."/>
            <person name="Takahashi H."/>
            <person name="Takemaru K."/>
            <person name="Takeuchi M."/>
            <person name="Tamakoshi A."/>
            <person name="Tanaka T."/>
            <person name="Terpstra P."/>
            <person name="Tognoni A."/>
            <person name="Tosato V."/>
            <person name="Uchiyama S."/>
            <person name="Vandenbol M."/>
            <person name="Vannier F."/>
            <person name="Vassarotti A."/>
            <person name="Viari A."/>
            <person name="Wambutt R."/>
            <person name="Wedler E."/>
            <person name="Wedler H."/>
            <person name="Weitzenegger T."/>
            <person name="Winters P."/>
            <person name="Wipat A."/>
            <person name="Yamamoto H."/>
            <person name="Yamane K."/>
            <person name="Yasumoto K."/>
            <person name="Yata K."/>
            <person name="Yoshida K."/>
            <person name="Yoshikawa H.-F."/>
            <person name="Zumstein E."/>
            <person name="Yoshikawa H."/>
            <person name="Danchin A."/>
        </authorList>
    </citation>
    <scope>NUCLEOTIDE SEQUENCE [LARGE SCALE GENOMIC DNA]</scope>
    <source>
        <strain>168</strain>
    </source>
</reference>
<organism>
    <name type="scientific">Bacillus subtilis (strain 168)</name>
    <dbReference type="NCBI Taxonomy" id="224308"/>
    <lineage>
        <taxon>Bacteria</taxon>
        <taxon>Bacillati</taxon>
        <taxon>Bacillota</taxon>
        <taxon>Bacilli</taxon>
        <taxon>Bacillales</taxon>
        <taxon>Bacillaceae</taxon>
        <taxon>Bacillus</taxon>
    </lineage>
</organism>
<protein>
    <recommendedName>
        <fullName>Uncharacterized HTH-type transcriptional regulator YoaU</fullName>
    </recommendedName>
</protein>
<accession>O34701</accession>
<dbReference type="EMBL" id="AF027868">
    <property type="protein sequence ID" value="AAB84454.1"/>
    <property type="molecule type" value="Genomic_DNA"/>
</dbReference>
<dbReference type="EMBL" id="AL009126">
    <property type="protein sequence ID" value="CAB13768.1"/>
    <property type="molecule type" value="Genomic_DNA"/>
</dbReference>
<dbReference type="PIR" id="F69897">
    <property type="entry name" value="F69897"/>
</dbReference>
<dbReference type="RefSeq" id="NP_389757.1">
    <property type="nucleotide sequence ID" value="NC_000964.3"/>
</dbReference>
<dbReference type="RefSeq" id="WP_004399248.1">
    <property type="nucleotide sequence ID" value="NZ_OZ025638.1"/>
</dbReference>
<dbReference type="SMR" id="O34701"/>
<dbReference type="FunCoup" id="O34701">
    <property type="interactions" value="55"/>
</dbReference>
<dbReference type="STRING" id="224308.BSU18760"/>
<dbReference type="PaxDb" id="224308-BSU18760"/>
<dbReference type="EnsemblBacteria" id="CAB13768">
    <property type="protein sequence ID" value="CAB13768"/>
    <property type="gene ID" value="BSU_18760"/>
</dbReference>
<dbReference type="GeneID" id="940127"/>
<dbReference type="KEGG" id="bsu:BSU18760"/>
<dbReference type="PATRIC" id="fig|224308.179.peg.2045"/>
<dbReference type="eggNOG" id="COG0583">
    <property type="taxonomic scope" value="Bacteria"/>
</dbReference>
<dbReference type="InParanoid" id="O34701"/>
<dbReference type="OrthoDB" id="63123at2"/>
<dbReference type="PhylomeDB" id="O34701"/>
<dbReference type="BioCyc" id="BSUB:BSU18760-MONOMER"/>
<dbReference type="Proteomes" id="UP000001570">
    <property type="component" value="Chromosome"/>
</dbReference>
<dbReference type="GO" id="GO:0003700">
    <property type="term" value="F:DNA-binding transcription factor activity"/>
    <property type="evidence" value="ECO:0007669"/>
    <property type="project" value="InterPro"/>
</dbReference>
<dbReference type="GO" id="GO:0043565">
    <property type="term" value="F:sequence-specific DNA binding"/>
    <property type="evidence" value="ECO:0000318"/>
    <property type="project" value="GO_Central"/>
</dbReference>
<dbReference type="GO" id="GO:0010628">
    <property type="term" value="P:positive regulation of gene expression"/>
    <property type="evidence" value="ECO:0000318"/>
    <property type="project" value="GO_Central"/>
</dbReference>
<dbReference type="CDD" id="cd05466">
    <property type="entry name" value="PBP2_LTTR_substrate"/>
    <property type="match status" value="1"/>
</dbReference>
<dbReference type="Gene3D" id="3.40.190.290">
    <property type="match status" value="1"/>
</dbReference>
<dbReference type="Gene3D" id="1.10.10.10">
    <property type="entry name" value="Winged helix-like DNA-binding domain superfamily/Winged helix DNA-binding domain"/>
    <property type="match status" value="1"/>
</dbReference>
<dbReference type="InterPro" id="IPR005119">
    <property type="entry name" value="LysR_subst-bd"/>
</dbReference>
<dbReference type="InterPro" id="IPR000847">
    <property type="entry name" value="Tscrpt_reg_HTH_LysR"/>
</dbReference>
<dbReference type="InterPro" id="IPR036388">
    <property type="entry name" value="WH-like_DNA-bd_sf"/>
</dbReference>
<dbReference type="InterPro" id="IPR036390">
    <property type="entry name" value="WH_DNA-bd_sf"/>
</dbReference>
<dbReference type="PANTHER" id="PTHR30427">
    <property type="entry name" value="TRANSCRIPTIONAL ACTIVATOR PROTEIN LYSR"/>
    <property type="match status" value="1"/>
</dbReference>
<dbReference type="PANTHER" id="PTHR30427:SF1">
    <property type="entry name" value="TRANSCRIPTIONAL ACTIVATOR PROTEIN LYSR"/>
    <property type="match status" value="1"/>
</dbReference>
<dbReference type="Pfam" id="PF00126">
    <property type="entry name" value="HTH_1"/>
    <property type="match status" value="1"/>
</dbReference>
<dbReference type="Pfam" id="PF03466">
    <property type="entry name" value="LysR_substrate"/>
    <property type="match status" value="1"/>
</dbReference>
<dbReference type="PRINTS" id="PR00039">
    <property type="entry name" value="HTHLYSR"/>
</dbReference>
<dbReference type="SUPFAM" id="SSF53850">
    <property type="entry name" value="Periplasmic binding protein-like II"/>
    <property type="match status" value="1"/>
</dbReference>
<dbReference type="SUPFAM" id="SSF46785">
    <property type="entry name" value="Winged helix' DNA-binding domain"/>
    <property type="match status" value="1"/>
</dbReference>
<dbReference type="PROSITE" id="PS50931">
    <property type="entry name" value="HTH_LYSR"/>
    <property type="match status" value="1"/>
</dbReference>
<sequence length="290" mass="32580">MVMNMNHLHIFVKVGEKLNITEAAKELFISQPAVSKAIKNLESSLQLKLLIRDKHHGLMLTDIGKEILLLARQMKGIESKIYQVANRENKLLNGKVKIGSFPAVSTNIMPQAIAAFRSNYPLIRIELIEGTSDQIKGWVEDRTVDIGIAASPFEPFENQLLCNDYMVAVIPPQRDELKLEKHVDLETYQDDLIFCKGGHEIAMSNAFSQYNIELKENLTVQNAETLINMVKNNLGIGIISNFTLSSVPHQLIKKDIFPRVTRDIGVIAHSFEEITPAAHEFVKVLKAVVI</sequence>
<name>YOAU_BACSU</name>
<evidence type="ECO:0000255" key="1">
    <source>
        <dbReference type="PROSITE-ProRule" id="PRU00253"/>
    </source>
</evidence>
<evidence type="ECO:0000305" key="2"/>
<keyword id="KW-0238">DNA-binding</keyword>
<keyword id="KW-1185">Reference proteome</keyword>
<keyword id="KW-0804">Transcription</keyword>
<keyword id="KW-0805">Transcription regulation</keyword>
<gene>
    <name type="primary">yoaU</name>
    <name type="ordered locus">BSU18760</name>
</gene>
<comment type="similarity">
    <text evidence="2">Belongs to the LysR transcriptional regulatory family.</text>
</comment>